<sequence>MTFSKQLFLYLFFLFPLLHASHPQQCSSSSCGRDDVHVRFPFWLLSKQPELCGHAGFNLQCTASPKTALKLPNSGTFLVREIDYLSQQIRLYDPENCLARKLLTFDISRSPFSALYLVSYTFLSCPNEVAKSSRFDSIPCLGNSTTSFLATTSLDLAKSMLPSCQIVKTLDVPVSRRVIAKKSRFSTDVNDKDLWLKWDSPSCSDCERDFLRCGFRSNTSLQVKCFPFENSGYNTEPQVLKIILLSIIGPLTIFATCIAVGVCTSERFASLIQRNVAIAALQPNEVIVTTGLDESIIESYKKTELGESRRLPGNNDDIVCPICLSEYASKETVRCIPECDHCFHSECIDVWLKIHGSCPLCRNSPSPARQAV</sequence>
<proteinExistence type="inferred from homology"/>
<keyword id="KW-0472">Membrane</keyword>
<keyword id="KW-0479">Metal-binding</keyword>
<keyword id="KW-1185">Reference proteome</keyword>
<keyword id="KW-0732">Signal</keyword>
<keyword id="KW-0808">Transferase</keyword>
<keyword id="KW-0812">Transmembrane</keyword>
<keyword id="KW-1133">Transmembrane helix</keyword>
<keyword id="KW-0833">Ubl conjugation pathway</keyword>
<keyword id="KW-0862">Zinc</keyword>
<keyword id="KW-0863">Zinc-finger</keyword>
<reference key="1">
    <citation type="journal article" date="1999" name="Nature">
        <title>Sequence and analysis of chromosome 2 of the plant Arabidopsis thaliana.</title>
        <authorList>
            <person name="Lin X."/>
            <person name="Kaul S."/>
            <person name="Rounsley S.D."/>
            <person name="Shea T.P."/>
            <person name="Benito M.-I."/>
            <person name="Town C.D."/>
            <person name="Fujii C.Y."/>
            <person name="Mason T.M."/>
            <person name="Bowman C.L."/>
            <person name="Barnstead M.E."/>
            <person name="Feldblyum T.V."/>
            <person name="Buell C.R."/>
            <person name="Ketchum K.A."/>
            <person name="Lee J.J."/>
            <person name="Ronning C.M."/>
            <person name="Koo H.L."/>
            <person name="Moffat K.S."/>
            <person name="Cronin L.A."/>
            <person name="Shen M."/>
            <person name="Pai G."/>
            <person name="Van Aken S."/>
            <person name="Umayam L."/>
            <person name="Tallon L.J."/>
            <person name="Gill J.E."/>
            <person name="Adams M.D."/>
            <person name="Carrera A.J."/>
            <person name="Creasy T.H."/>
            <person name="Goodman H.M."/>
            <person name="Somerville C.R."/>
            <person name="Copenhaver G.P."/>
            <person name="Preuss D."/>
            <person name="Nierman W.C."/>
            <person name="White O."/>
            <person name="Eisen J.A."/>
            <person name="Salzberg S.L."/>
            <person name="Fraser C.M."/>
            <person name="Venter J.C."/>
        </authorList>
    </citation>
    <scope>NUCLEOTIDE SEQUENCE [LARGE SCALE GENOMIC DNA]</scope>
    <source>
        <strain>cv. Columbia</strain>
    </source>
</reference>
<reference key="2">
    <citation type="journal article" date="2017" name="Plant J.">
        <title>Araport11: a complete reannotation of the Arabidopsis thaliana reference genome.</title>
        <authorList>
            <person name="Cheng C.Y."/>
            <person name="Krishnakumar V."/>
            <person name="Chan A.P."/>
            <person name="Thibaud-Nissen F."/>
            <person name="Schobel S."/>
            <person name="Town C.D."/>
        </authorList>
    </citation>
    <scope>GENOME REANNOTATION</scope>
    <source>
        <strain>cv. Columbia</strain>
    </source>
</reference>
<reference key="3">
    <citation type="journal article" date="2002" name="Genome Biol.">
        <title>Evaluation and classification of RING-finger domains encoded by the Arabidopsis genome.</title>
        <authorList>
            <person name="Kosarev P."/>
            <person name="Mayer K.F.X."/>
            <person name="Hardtke C.S."/>
        </authorList>
    </citation>
    <scope>GENE FAMILY ORGANIZATION</scope>
</reference>
<reference key="4">
    <citation type="journal article" date="2006" name="J. Mol. Evol.">
        <title>The ATL gene family from Arabidopsis thaliana and Oryza sativa comprises a large number of putative ubiquitin ligases of the RING-H2 type.</title>
        <authorList>
            <person name="Serrano M."/>
            <person name="Parra S."/>
            <person name="Alcaraz L.D."/>
            <person name="Guzman P."/>
        </authorList>
    </citation>
    <scope>NOMENCLATURE</scope>
    <scope>GENE FAMILY ORGANIZATION</scope>
</reference>
<evidence type="ECO:0000250" key="1"/>
<evidence type="ECO:0000255" key="2"/>
<evidence type="ECO:0000255" key="3">
    <source>
        <dbReference type="PROSITE-ProRule" id="PRU00175"/>
    </source>
</evidence>
<evidence type="ECO:0000305" key="4"/>
<gene>
    <name type="primary">ATL21A</name>
    <name type="ordered locus">At2g46495</name>
    <name type="ORF">F11C10</name>
    <name type="ORF">F13A10</name>
</gene>
<dbReference type="EC" id="2.3.2.27" evidence="4"/>
<dbReference type="EMBL" id="AC006418">
    <property type="status" value="NOT_ANNOTATED_CDS"/>
    <property type="molecule type" value="Genomic_DNA"/>
</dbReference>
<dbReference type="EMBL" id="AC006526">
    <property type="status" value="NOT_ANNOTATED_CDS"/>
    <property type="molecule type" value="Genomic_DNA"/>
</dbReference>
<dbReference type="EMBL" id="CP002685">
    <property type="protein sequence ID" value="AEC10707.1"/>
    <property type="molecule type" value="Genomic_DNA"/>
</dbReference>
<dbReference type="RefSeq" id="NP_850456.2">
    <property type="nucleotide sequence ID" value="NM_180125.3"/>
</dbReference>
<dbReference type="SMR" id="P0CH01"/>
<dbReference type="PaxDb" id="3702-AT2G46495.1"/>
<dbReference type="EnsemblPlants" id="AT2G46495.1">
    <property type="protein sequence ID" value="AT2G46495.1"/>
    <property type="gene ID" value="AT2G46495"/>
</dbReference>
<dbReference type="GeneID" id="819259"/>
<dbReference type="Gramene" id="AT2G46495.1">
    <property type="protein sequence ID" value="AT2G46495.1"/>
    <property type="gene ID" value="AT2G46495"/>
</dbReference>
<dbReference type="KEGG" id="ath:AT2G46495"/>
<dbReference type="Araport" id="AT2G46495"/>
<dbReference type="TAIR" id="AT2G46495">
    <property type="gene designation" value="ATL21"/>
</dbReference>
<dbReference type="eggNOG" id="KOG0800">
    <property type="taxonomic scope" value="Eukaryota"/>
</dbReference>
<dbReference type="HOGENOM" id="CLU_046769_0_0_1"/>
<dbReference type="InParanoid" id="P0CH01"/>
<dbReference type="OrthoDB" id="8062037at2759"/>
<dbReference type="PhylomeDB" id="P0CH01"/>
<dbReference type="UniPathway" id="UPA00143"/>
<dbReference type="PRO" id="PR:P0CH01"/>
<dbReference type="Proteomes" id="UP000006548">
    <property type="component" value="Chromosome 2"/>
</dbReference>
<dbReference type="ExpressionAtlas" id="P0CH01">
    <property type="expression patterns" value="baseline and differential"/>
</dbReference>
<dbReference type="GO" id="GO:0016020">
    <property type="term" value="C:membrane"/>
    <property type="evidence" value="ECO:0007669"/>
    <property type="project" value="UniProtKB-SubCell"/>
</dbReference>
<dbReference type="GO" id="GO:0030247">
    <property type="term" value="F:polysaccharide binding"/>
    <property type="evidence" value="ECO:0007669"/>
    <property type="project" value="InterPro"/>
</dbReference>
<dbReference type="GO" id="GO:0016740">
    <property type="term" value="F:transferase activity"/>
    <property type="evidence" value="ECO:0007669"/>
    <property type="project" value="UniProtKB-KW"/>
</dbReference>
<dbReference type="GO" id="GO:0008270">
    <property type="term" value="F:zinc ion binding"/>
    <property type="evidence" value="ECO:0007669"/>
    <property type="project" value="UniProtKB-KW"/>
</dbReference>
<dbReference type="GO" id="GO:0016567">
    <property type="term" value="P:protein ubiquitination"/>
    <property type="evidence" value="ECO:0007669"/>
    <property type="project" value="UniProtKB-UniPathway"/>
</dbReference>
<dbReference type="CDD" id="cd16461">
    <property type="entry name" value="RING-H2_EL5-like"/>
    <property type="match status" value="1"/>
</dbReference>
<dbReference type="Gene3D" id="3.30.40.10">
    <property type="entry name" value="Zinc/RING finger domain, C3HC4 (zinc finger)"/>
    <property type="match status" value="1"/>
</dbReference>
<dbReference type="InterPro" id="IPR046948">
    <property type="entry name" value="ATL20-22-like"/>
</dbReference>
<dbReference type="InterPro" id="IPR025287">
    <property type="entry name" value="WAK_GUB"/>
</dbReference>
<dbReference type="InterPro" id="IPR001841">
    <property type="entry name" value="Znf_RING"/>
</dbReference>
<dbReference type="InterPro" id="IPR013083">
    <property type="entry name" value="Znf_RING/FYVE/PHD"/>
</dbReference>
<dbReference type="PANTHER" id="PTHR46279:SF2">
    <property type="entry name" value="RING-H2 FINGER PROTEIN ATL21A-RELATED"/>
    <property type="match status" value="1"/>
</dbReference>
<dbReference type="PANTHER" id="PTHR46279">
    <property type="entry name" value="RING/U-BOX SUPERFAMILY PROTEIN"/>
    <property type="match status" value="1"/>
</dbReference>
<dbReference type="Pfam" id="PF13947">
    <property type="entry name" value="GUB_WAK_bind"/>
    <property type="match status" value="1"/>
</dbReference>
<dbReference type="Pfam" id="PF13639">
    <property type="entry name" value="zf-RING_2"/>
    <property type="match status" value="1"/>
</dbReference>
<dbReference type="SMART" id="SM00184">
    <property type="entry name" value="RING"/>
    <property type="match status" value="1"/>
</dbReference>
<dbReference type="SUPFAM" id="SSF57850">
    <property type="entry name" value="RING/U-box"/>
    <property type="match status" value="1"/>
</dbReference>
<dbReference type="PROSITE" id="PS50089">
    <property type="entry name" value="ZF_RING_2"/>
    <property type="match status" value="1"/>
</dbReference>
<organism>
    <name type="scientific">Arabidopsis thaliana</name>
    <name type="common">Mouse-ear cress</name>
    <dbReference type="NCBI Taxonomy" id="3702"/>
    <lineage>
        <taxon>Eukaryota</taxon>
        <taxon>Viridiplantae</taxon>
        <taxon>Streptophyta</taxon>
        <taxon>Embryophyta</taxon>
        <taxon>Tracheophyta</taxon>
        <taxon>Spermatophyta</taxon>
        <taxon>Magnoliopsida</taxon>
        <taxon>eudicotyledons</taxon>
        <taxon>Gunneridae</taxon>
        <taxon>Pentapetalae</taxon>
        <taxon>rosids</taxon>
        <taxon>malvids</taxon>
        <taxon>Brassicales</taxon>
        <taxon>Brassicaceae</taxon>
        <taxon>Camelineae</taxon>
        <taxon>Arabidopsis</taxon>
    </lineage>
</organism>
<protein>
    <recommendedName>
        <fullName>Putative RING-H2 finger protein ATL21A</fullName>
        <ecNumber evidence="4">2.3.2.27</ecNumber>
    </recommendedName>
    <alternativeName>
        <fullName evidence="4">RING-type E3 ubiquitin transferase ATL21A</fullName>
    </alternativeName>
</protein>
<feature type="signal peptide" evidence="2">
    <location>
        <begin position="1"/>
        <end position="20"/>
    </location>
</feature>
<feature type="chain" id="PRO_0000396120" description="Putative RING-H2 finger protein ATL21A">
    <location>
        <begin position="21"/>
        <end position="372"/>
    </location>
</feature>
<feature type="transmembrane region" description="Helical" evidence="2">
    <location>
        <begin position="242"/>
        <end position="262"/>
    </location>
</feature>
<feature type="zinc finger region" description="RING-type; atypical" evidence="3">
    <location>
        <begin position="320"/>
        <end position="362"/>
    </location>
</feature>
<accession>P0CH01</accession>
<accession>Q3EBF2</accession>
<name>AT21A_ARATH</name>
<comment type="catalytic activity">
    <reaction evidence="4">
        <text>S-ubiquitinyl-[E2 ubiquitin-conjugating enzyme]-L-cysteine + [acceptor protein]-L-lysine = [E2 ubiquitin-conjugating enzyme]-L-cysteine + N(6)-ubiquitinyl-[acceptor protein]-L-lysine.</text>
        <dbReference type="EC" id="2.3.2.27"/>
    </reaction>
</comment>
<comment type="pathway">
    <text>Protein modification; protein ubiquitination.</text>
</comment>
<comment type="subcellular location">
    <subcellularLocation>
        <location evidence="4">Membrane</location>
        <topology evidence="4">Single-pass membrane protein</topology>
    </subcellularLocation>
</comment>
<comment type="domain">
    <text evidence="1">The RING-type zinc finger domain mediates binding to an E2 ubiquitin-conjugating enzyme.</text>
</comment>
<comment type="similarity">
    <text evidence="4">Belongs to the RING-type zinc finger family. ATL subfamily.</text>
</comment>